<comment type="cofactor">
    <cofactor evidence="1">
        <name>[4Fe-4S] cluster</name>
        <dbReference type="ChEBI" id="CHEBI:49883"/>
    </cofactor>
    <text evidence="1">Binds 1 [4Fe-4S] cluster. The cluster is coordinated with 3 cysteines and an exchangeable S-adenosyl-L-methionine.</text>
</comment>
<comment type="similarity">
    <text evidence="1">Belongs to the UPF0313 family.</text>
</comment>
<dbReference type="EMBL" id="AE015924">
    <property type="protein sequence ID" value="AAQ66068.1"/>
    <property type="molecule type" value="Genomic_DNA"/>
</dbReference>
<dbReference type="RefSeq" id="WP_010956162.1">
    <property type="nucleotide sequence ID" value="NC_002950.2"/>
</dbReference>
<dbReference type="STRING" id="242619.PG_0934"/>
<dbReference type="EnsemblBacteria" id="AAQ66068">
    <property type="protein sequence ID" value="AAQ66068"/>
    <property type="gene ID" value="PG_0934"/>
</dbReference>
<dbReference type="KEGG" id="pgi:PG_0934"/>
<dbReference type="PATRIC" id="fig|242619.8.peg.861"/>
<dbReference type="eggNOG" id="COG1032">
    <property type="taxonomic scope" value="Bacteria"/>
</dbReference>
<dbReference type="HOGENOM" id="CLU_018288_2_0_10"/>
<dbReference type="BioCyc" id="PGIN242619:G1G02-868-MONOMER"/>
<dbReference type="Proteomes" id="UP000000588">
    <property type="component" value="Chromosome"/>
</dbReference>
<dbReference type="GO" id="GO:0051539">
    <property type="term" value="F:4 iron, 4 sulfur cluster binding"/>
    <property type="evidence" value="ECO:0007669"/>
    <property type="project" value="UniProtKB-KW"/>
</dbReference>
<dbReference type="GO" id="GO:0003824">
    <property type="term" value="F:catalytic activity"/>
    <property type="evidence" value="ECO:0007669"/>
    <property type="project" value="InterPro"/>
</dbReference>
<dbReference type="GO" id="GO:0005506">
    <property type="term" value="F:iron ion binding"/>
    <property type="evidence" value="ECO:0007669"/>
    <property type="project" value="UniProtKB-UniRule"/>
</dbReference>
<dbReference type="Gene3D" id="3.80.30.20">
    <property type="entry name" value="tm_1862 like domain"/>
    <property type="match status" value="1"/>
</dbReference>
<dbReference type="HAMAP" id="MF_01251">
    <property type="entry name" value="UPF0313"/>
    <property type="match status" value="1"/>
</dbReference>
<dbReference type="InterPro" id="IPR006638">
    <property type="entry name" value="Elp3/MiaA/NifB-like_rSAM"/>
</dbReference>
<dbReference type="InterPro" id="IPR020612">
    <property type="entry name" value="Methylthiotransferase_CS"/>
</dbReference>
<dbReference type="InterPro" id="IPR007197">
    <property type="entry name" value="rSAM"/>
</dbReference>
<dbReference type="InterPro" id="IPR023404">
    <property type="entry name" value="rSAM_horseshoe"/>
</dbReference>
<dbReference type="InterPro" id="IPR022946">
    <property type="entry name" value="UPF0313"/>
</dbReference>
<dbReference type="InterPro" id="IPR024560">
    <property type="entry name" value="UPF0313_C"/>
</dbReference>
<dbReference type="InterPro" id="IPR013704">
    <property type="entry name" value="UPF0313_N"/>
</dbReference>
<dbReference type="NCBIfam" id="TIGR03904">
    <property type="entry name" value="SAM_YgiQ"/>
    <property type="match status" value="1"/>
</dbReference>
<dbReference type="PANTHER" id="PTHR32331">
    <property type="entry name" value="UPF0313 PROTEIN YGIQ"/>
    <property type="match status" value="1"/>
</dbReference>
<dbReference type="PANTHER" id="PTHR32331:SF0">
    <property type="entry name" value="UPF0313 PROTEIN YGIQ"/>
    <property type="match status" value="1"/>
</dbReference>
<dbReference type="Pfam" id="PF11842">
    <property type="entry name" value="DUF3362"/>
    <property type="match status" value="1"/>
</dbReference>
<dbReference type="Pfam" id="PF08497">
    <property type="entry name" value="Radical_SAM_N"/>
    <property type="match status" value="1"/>
</dbReference>
<dbReference type="SFLD" id="SFLDG01082">
    <property type="entry name" value="B12-binding_domain_containing"/>
    <property type="match status" value="1"/>
</dbReference>
<dbReference type="SFLD" id="SFLDS00029">
    <property type="entry name" value="Radical_SAM"/>
    <property type="match status" value="1"/>
</dbReference>
<dbReference type="SFLD" id="SFLDG01069">
    <property type="entry name" value="UPF0313"/>
    <property type="match status" value="1"/>
</dbReference>
<dbReference type="SMART" id="SM00729">
    <property type="entry name" value="Elp3"/>
    <property type="match status" value="1"/>
</dbReference>
<dbReference type="SUPFAM" id="SSF102114">
    <property type="entry name" value="Radical SAM enzymes"/>
    <property type="match status" value="1"/>
</dbReference>
<dbReference type="PROSITE" id="PS51918">
    <property type="entry name" value="RADICAL_SAM"/>
    <property type="match status" value="1"/>
</dbReference>
<keyword id="KW-0004">4Fe-4S</keyword>
<keyword id="KW-0408">Iron</keyword>
<keyword id="KW-0411">Iron-sulfur</keyword>
<keyword id="KW-0479">Metal-binding</keyword>
<keyword id="KW-1185">Reference proteome</keyword>
<keyword id="KW-0949">S-adenosyl-L-methionine</keyword>
<protein>
    <recommendedName>
        <fullName evidence="1">UPF0313 protein PG_0934</fullName>
    </recommendedName>
</protein>
<reference key="1">
    <citation type="journal article" date="2003" name="J. Bacteriol.">
        <title>Complete genome sequence of the oral pathogenic bacterium Porphyromonas gingivalis strain W83.</title>
        <authorList>
            <person name="Nelson K.E."/>
            <person name="Fleischmann R.D."/>
            <person name="DeBoy R.T."/>
            <person name="Paulsen I.T."/>
            <person name="Fouts D.E."/>
            <person name="Eisen J.A."/>
            <person name="Daugherty S.C."/>
            <person name="Dodson R.J."/>
            <person name="Durkin A.S."/>
            <person name="Gwinn M.L."/>
            <person name="Haft D.H."/>
            <person name="Kolonay J.F."/>
            <person name="Nelson W.C."/>
            <person name="Mason T.M."/>
            <person name="Tallon L."/>
            <person name="Gray J."/>
            <person name="Granger D."/>
            <person name="Tettelin H."/>
            <person name="Dong H."/>
            <person name="Galvin J.L."/>
            <person name="Duncan M.J."/>
            <person name="Dewhirst F.E."/>
            <person name="Fraser C.M."/>
        </authorList>
    </citation>
    <scope>NUCLEOTIDE SEQUENCE [LARGE SCALE GENOMIC DNA]</scope>
    <source>
        <strain>ATCC BAA-308 / W83</strain>
    </source>
</reference>
<gene>
    <name type="ordered locus">PG_0934</name>
</gene>
<evidence type="ECO:0000255" key="1">
    <source>
        <dbReference type="HAMAP-Rule" id="MF_01251"/>
    </source>
</evidence>
<evidence type="ECO:0000255" key="2">
    <source>
        <dbReference type="PROSITE-ProRule" id="PRU01266"/>
    </source>
</evidence>
<evidence type="ECO:0000256" key="3">
    <source>
        <dbReference type="SAM" id="MobiDB-lite"/>
    </source>
</evidence>
<organism>
    <name type="scientific">Porphyromonas gingivalis (strain ATCC BAA-308 / W83)</name>
    <dbReference type="NCBI Taxonomy" id="242619"/>
    <lineage>
        <taxon>Bacteria</taxon>
        <taxon>Pseudomonadati</taxon>
        <taxon>Bacteroidota</taxon>
        <taxon>Bacteroidia</taxon>
        <taxon>Bacteroidales</taxon>
        <taxon>Porphyromonadaceae</taxon>
        <taxon>Porphyromonas</taxon>
    </lineage>
</organism>
<feature type="chain" id="PRO_0000076388" description="UPF0313 protein PG_0934">
    <location>
        <begin position="1"/>
        <end position="634"/>
    </location>
</feature>
<feature type="domain" description="Radical SAM core" evidence="2">
    <location>
        <begin position="302"/>
        <end position="582"/>
    </location>
</feature>
<feature type="region of interest" description="Disordered" evidence="3">
    <location>
        <begin position="607"/>
        <end position="634"/>
    </location>
</feature>
<feature type="compositionally biased region" description="Basic residues" evidence="3">
    <location>
        <begin position="625"/>
        <end position="634"/>
    </location>
</feature>
<feature type="binding site" evidence="1">
    <location>
        <position position="316"/>
    </location>
    <ligand>
        <name>[4Fe-4S] cluster</name>
        <dbReference type="ChEBI" id="CHEBI:49883"/>
        <note>4Fe-4S-S-AdoMet</note>
    </ligand>
</feature>
<feature type="binding site" evidence="1">
    <location>
        <position position="320"/>
    </location>
    <ligand>
        <name>[4Fe-4S] cluster</name>
        <dbReference type="ChEBI" id="CHEBI:49883"/>
        <note>4Fe-4S-S-AdoMet</note>
    </ligand>
</feature>
<feature type="binding site" evidence="1">
    <location>
        <position position="323"/>
    </location>
    <ligand>
        <name>[4Fe-4S] cluster</name>
        <dbReference type="ChEBI" id="CHEBI:49883"/>
        <note>4Fe-4S-S-AdoMet</note>
    </ligand>
</feature>
<sequence length="634" mass="73044">MAKHHPLTDWLPTSKKEMEAKGWDEADVILFSGDAYVDHPSFGAAVVGRILEAEGLRVAIVPQPNWRDDLRDFRKLGRPRLFFGVSAGAMDSMVNKYTANRRLRSEDAYTPDRRSDMRPDYPTIVYTRILKELFPDVPVIVGGIEASLRRLTHYDYWQDKLLPGILYQSGADLLIYGMGELPLHEIAQRLIAGEPFDSLKSIRQIAYLVPKGKTPVPCENDRHLFSHEECLSDKRKQAQNFREIEIQSNRYEADRILQAVGDSTIVVNPPFPPMSTAQIDQSFDLPYTRLPHPRYKGKIISAYEMIKHSVNVHRGCFGGCAFCTISAHQGKFIASRSEASVLREVKEITEMEDFKGYLSDVGGPSANMYKMQGYDLSICKRCKKPSCIHPNVCPNLNADHRPLLDLLRRIDKNPKIKKSFIGSGVRMDLLLHNYKDKVLKKAADEYTEDLIVKHVSGRLKVAPEHSSDRVLNLMRKPPFRQFAEFTKRFQRINEAHGLRQQLIPYFISSHPGCTEEDMAELAILTKKLDFKLEQIQDFTPTPMTLATEMYYTGYHPYTLQPVYTAIKKEEKMRQHMFFFWYKREEADKIRRELHRIGRPDLIAKLFDRTTSSRNDRHTPPSTQPRKSKSKSRHS</sequence>
<proteinExistence type="inferred from homology"/>
<accession>Q7MVU9</accession>
<name>Y934_PORGI</name>